<reference key="1">
    <citation type="journal article" date="2005" name="Nature">
        <title>Genome sequence, comparative analysis and haplotype structure of the domestic dog.</title>
        <authorList>
            <person name="Lindblad-Toh K."/>
            <person name="Wade C.M."/>
            <person name="Mikkelsen T.S."/>
            <person name="Karlsson E.K."/>
            <person name="Jaffe D.B."/>
            <person name="Kamal M."/>
            <person name="Clamp M."/>
            <person name="Chang J.L."/>
            <person name="Kulbokas E.J. III"/>
            <person name="Zody M.C."/>
            <person name="Mauceli E."/>
            <person name="Xie X."/>
            <person name="Breen M."/>
            <person name="Wayne R.K."/>
            <person name="Ostrander E.A."/>
            <person name="Ponting C.P."/>
            <person name="Galibert F."/>
            <person name="Smith D.R."/>
            <person name="deJong P.J."/>
            <person name="Kirkness E.F."/>
            <person name="Alvarez P."/>
            <person name="Biagi T."/>
            <person name="Brockman W."/>
            <person name="Butler J."/>
            <person name="Chin C.-W."/>
            <person name="Cook A."/>
            <person name="Cuff J."/>
            <person name="Daly M.J."/>
            <person name="DeCaprio D."/>
            <person name="Gnerre S."/>
            <person name="Grabherr M."/>
            <person name="Kellis M."/>
            <person name="Kleber M."/>
            <person name="Bardeleben C."/>
            <person name="Goodstadt L."/>
            <person name="Heger A."/>
            <person name="Hitte C."/>
            <person name="Kim L."/>
            <person name="Koepfli K.-P."/>
            <person name="Parker H.G."/>
            <person name="Pollinger J.P."/>
            <person name="Searle S.M.J."/>
            <person name="Sutter N.B."/>
            <person name="Thomas R."/>
            <person name="Webber C."/>
            <person name="Baldwin J."/>
            <person name="Abebe A."/>
            <person name="Abouelleil A."/>
            <person name="Aftuck L."/>
            <person name="Ait-Zahra M."/>
            <person name="Aldredge T."/>
            <person name="Allen N."/>
            <person name="An P."/>
            <person name="Anderson S."/>
            <person name="Antoine C."/>
            <person name="Arachchi H."/>
            <person name="Aslam A."/>
            <person name="Ayotte L."/>
            <person name="Bachantsang P."/>
            <person name="Barry A."/>
            <person name="Bayul T."/>
            <person name="Benamara M."/>
            <person name="Berlin A."/>
            <person name="Bessette D."/>
            <person name="Blitshteyn B."/>
            <person name="Bloom T."/>
            <person name="Blye J."/>
            <person name="Boguslavskiy L."/>
            <person name="Bonnet C."/>
            <person name="Boukhgalter B."/>
            <person name="Brown A."/>
            <person name="Cahill P."/>
            <person name="Calixte N."/>
            <person name="Camarata J."/>
            <person name="Cheshatsang Y."/>
            <person name="Chu J."/>
            <person name="Citroen M."/>
            <person name="Collymore A."/>
            <person name="Cooke P."/>
            <person name="Dawoe T."/>
            <person name="Daza R."/>
            <person name="Decktor K."/>
            <person name="DeGray S."/>
            <person name="Dhargay N."/>
            <person name="Dooley K."/>
            <person name="Dooley K."/>
            <person name="Dorje P."/>
            <person name="Dorjee K."/>
            <person name="Dorris L."/>
            <person name="Duffey N."/>
            <person name="Dupes A."/>
            <person name="Egbiremolen O."/>
            <person name="Elong R."/>
            <person name="Falk J."/>
            <person name="Farina A."/>
            <person name="Faro S."/>
            <person name="Ferguson D."/>
            <person name="Ferreira P."/>
            <person name="Fisher S."/>
            <person name="FitzGerald M."/>
            <person name="Foley K."/>
            <person name="Foley C."/>
            <person name="Franke A."/>
            <person name="Friedrich D."/>
            <person name="Gage D."/>
            <person name="Garber M."/>
            <person name="Gearin G."/>
            <person name="Giannoukos G."/>
            <person name="Goode T."/>
            <person name="Goyette A."/>
            <person name="Graham J."/>
            <person name="Grandbois E."/>
            <person name="Gyaltsen K."/>
            <person name="Hafez N."/>
            <person name="Hagopian D."/>
            <person name="Hagos B."/>
            <person name="Hall J."/>
            <person name="Healy C."/>
            <person name="Hegarty R."/>
            <person name="Honan T."/>
            <person name="Horn A."/>
            <person name="Houde N."/>
            <person name="Hughes L."/>
            <person name="Hunnicutt L."/>
            <person name="Husby M."/>
            <person name="Jester B."/>
            <person name="Jones C."/>
            <person name="Kamat A."/>
            <person name="Kanga B."/>
            <person name="Kells C."/>
            <person name="Khazanovich D."/>
            <person name="Kieu A.C."/>
            <person name="Kisner P."/>
            <person name="Kumar M."/>
            <person name="Lance K."/>
            <person name="Landers T."/>
            <person name="Lara M."/>
            <person name="Lee W."/>
            <person name="Leger J.-P."/>
            <person name="Lennon N."/>
            <person name="Leuper L."/>
            <person name="LeVine S."/>
            <person name="Liu J."/>
            <person name="Liu X."/>
            <person name="Lokyitsang Y."/>
            <person name="Lokyitsang T."/>
            <person name="Lui A."/>
            <person name="Macdonald J."/>
            <person name="Major J."/>
            <person name="Marabella R."/>
            <person name="Maru K."/>
            <person name="Matthews C."/>
            <person name="McDonough S."/>
            <person name="Mehta T."/>
            <person name="Meldrim J."/>
            <person name="Melnikov A."/>
            <person name="Meneus L."/>
            <person name="Mihalev A."/>
            <person name="Mihova T."/>
            <person name="Miller K."/>
            <person name="Mittelman R."/>
            <person name="Mlenga V."/>
            <person name="Mulrain L."/>
            <person name="Munson G."/>
            <person name="Navidi A."/>
            <person name="Naylor J."/>
            <person name="Nguyen T."/>
            <person name="Nguyen N."/>
            <person name="Nguyen C."/>
            <person name="Nguyen T."/>
            <person name="Nicol R."/>
            <person name="Norbu N."/>
            <person name="Norbu C."/>
            <person name="Novod N."/>
            <person name="Nyima T."/>
            <person name="Olandt P."/>
            <person name="O'Neill B."/>
            <person name="O'Neill K."/>
            <person name="Osman S."/>
            <person name="Oyono L."/>
            <person name="Patti C."/>
            <person name="Perrin D."/>
            <person name="Phunkhang P."/>
            <person name="Pierre F."/>
            <person name="Priest M."/>
            <person name="Rachupka A."/>
            <person name="Raghuraman S."/>
            <person name="Rameau R."/>
            <person name="Ray V."/>
            <person name="Raymond C."/>
            <person name="Rege F."/>
            <person name="Rise C."/>
            <person name="Rogers J."/>
            <person name="Rogov P."/>
            <person name="Sahalie J."/>
            <person name="Settipalli S."/>
            <person name="Sharpe T."/>
            <person name="Shea T."/>
            <person name="Sheehan M."/>
            <person name="Sherpa N."/>
            <person name="Shi J."/>
            <person name="Shih D."/>
            <person name="Sloan J."/>
            <person name="Smith C."/>
            <person name="Sparrow T."/>
            <person name="Stalker J."/>
            <person name="Stange-Thomann N."/>
            <person name="Stavropoulos S."/>
            <person name="Stone C."/>
            <person name="Stone S."/>
            <person name="Sykes S."/>
            <person name="Tchuinga P."/>
            <person name="Tenzing P."/>
            <person name="Tesfaye S."/>
            <person name="Thoulutsang D."/>
            <person name="Thoulutsang Y."/>
            <person name="Topham K."/>
            <person name="Topping I."/>
            <person name="Tsamla T."/>
            <person name="Vassiliev H."/>
            <person name="Venkataraman V."/>
            <person name="Vo A."/>
            <person name="Wangchuk T."/>
            <person name="Wangdi T."/>
            <person name="Weiand M."/>
            <person name="Wilkinson J."/>
            <person name="Wilson A."/>
            <person name="Yadav S."/>
            <person name="Yang S."/>
            <person name="Yang X."/>
            <person name="Young G."/>
            <person name="Yu Q."/>
            <person name="Zainoun J."/>
            <person name="Zembek L."/>
            <person name="Zimmer A."/>
            <person name="Lander E.S."/>
        </authorList>
    </citation>
    <scope>NUCLEOTIDE SEQUENCE [LARGE SCALE GENOMIC DNA]</scope>
    <source>
        <strain>Boxer</strain>
    </source>
</reference>
<reference key="2">
    <citation type="journal article" date="2002" name="Mol. Biol. Cell">
        <title>The small GTPase Rab13 regulates assembly of functional tight junctions in epithelial cells.</title>
        <authorList>
            <person name="Marzesco A.M."/>
            <person name="Dunia I."/>
            <person name="Pandjaitan R."/>
            <person name="Recouvreur M."/>
            <person name="Dauzonne D."/>
            <person name="Benedetti E.L."/>
            <person name="Louvard D."/>
            <person name="Zahraoui A."/>
        </authorList>
    </citation>
    <scope>FUNCTION IN TIGHT JUNCTION ASSEMBLY</scope>
</reference>
<reference key="3">
    <citation type="journal article" date="2004" name="J. Cell Biol.">
        <title>Rab13 regulates PKA signaling during tight junction assembly.</title>
        <authorList>
            <person name="Koehler K."/>
            <person name="Louvard D."/>
            <person name="Zahraoui A."/>
        </authorList>
    </citation>
    <scope>INTERACTION WITH PRKACA</scope>
</reference>
<reference key="4">
    <citation type="journal article" date="2008" name="J. Cell Biol.">
        <title>Rab13 regulates membrane trafficking between TGN and recycling endosomes in polarized epithelial cells.</title>
        <authorList>
            <person name="Nokes R.L."/>
            <person name="Fields I.C."/>
            <person name="Collins R.N."/>
            <person name="Foelsch H."/>
        </authorList>
    </citation>
    <scope>FUNCTION</scope>
</reference>
<reference key="5">
    <citation type="journal article" date="2008" name="Mol. Biol. Cell">
        <title>The interaction of JRAB/MICAL-L2 with Rab8 and Rab13 coordinates the assembly of tight junctions and adherens junctions.</title>
        <authorList>
            <person name="Yamamura R."/>
            <person name="Nishimura N."/>
            <person name="Nakatsuji H."/>
            <person name="Arase S."/>
            <person name="Sasaki T."/>
        </authorList>
    </citation>
    <scope>FUNCTION IN ENDOCYTIC RECYCLING</scope>
    <scope>SUBCELLULAR LOCATION</scope>
    <scope>INTERACTION WITH MICALL2</scope>
</reference>
<evidence type="ECO:0000250" key="1">
    <source>
        <dbReference type="UniProtKB" id="P35286"/>
    </source>
</evidence>
<evidence type="ECO:0000250" key="2">
    <source>
        <dbReference type="UniProtKB" id="P51153"/>
    </source>
</evidence>
<evidence type="ECO:0000250" key="3">
    <source>
        <dbReference type="UniProtKB" id="P62820"/>
    </source>
</evidence>
<evidence type="ECO:0000250" key="4">
    <source>
        <dbReference type="UniProtKB" id="Q9DD03"/>
    </source>
</evidence>
<evidence type="ECO:0000255" key="5"/>
<evidence type="ECO:0000256" key="6">
    <source>
        <dbReference type="SAM" id="MobiDB-lite"/>
    </source>
</evidence>
<evidence type="ECO:0000269" key="7">
    <source>
    </source>
</evidence>
<evidence type="ECO:0000269" key="8">
    <source>
    </source>
</evidence>
<evidence type="ECO:0000269" key="9">
    <source>
    </source>
</evidence>
<evidence type="ECO:0000269" key="10">
    <source>
    </source>
</evidence>
<evidence type="ECO:0000305" key="11"/>
<proteinExistence type="evidence at protein level"/>
<protein>
    <recommendedName>
        <fullName>Ras-related protein Rab-13</fullName>
        <ecNumber evidence="4">3.6.5.2</ecNumber>
    </recommendedName>
</protein>
<feature type="chain" id="PRO_0000424142" description="Ras-related protein Rab-13">
    <location>
        <begin position="1"/>
        <end position="200"/>
    </location>
</feature>
<feature type="propeptide" id="PRO_0000424143" description="Removed in mature form" evidence="5">
    <location>
        <begin position="201"/>
        <end position="203"/>
    </location>
</feature>
<feature type="region of interest" description="Disordered" evidence="6">
    <location>
        <begin position="173"/>
        <end position="203"/>
    </location>
</feature>
<feature type="short sequence motif" description="Switch 1" evidence="3">
    <location>
        <begin position="31"/>
        <end position="45"/>
    </location>
</feature>
<feature type="short sequence motif" description="Switch 2" evidence="3">
    <location>
        <begin position="63"/>
        <end position="80"/>
    </location>
</feature>
<feature type="binding site" evidence="3">
    <location>
        <position position="17"/>
    </location>
    <ligand>
        <name>GTP</name>
        <dbReference type="ChEBI" id="CHEBI:37565"/>
    </ligand>
</feature>
<feature type="binding site" evidence="3">
    <location>
        <position position="18"/>
    </location>
    <ligand>
        <name>GTP</name>
        <dbReference type="ChEBI" id="CHEBI:37565"/>
    </ligand>
</feature>
<feature type="binding site" evidence="3">
    <location>
        <position position="20"/>
    </location>
    <ligand>
        <name>GTP</name>
        <dbReference type="ChEBI" id="CHEBI:37565"/>
    </ligand>
</feature>
<feature type="binding site" evidence="3">
    <location>
        <position position="21"/>
    </location>
    <ligand>
        <name>GTP</name>
        <dbReference type="ChEBI" id="CHEBI:37565"/>
    </ligand>
</feature>
<feature type="binding site" evidence="3">
    <location>
        <position position="22"/>
    </location>
    <ligand>
        <name>GTP</name>
        <dbReference type="ChEBI" id="CHEBI:37565"/>
    </ligand>
</feature>
<feature type="binding site" evidence="3">
    <location>
        <position position="22"/>
    </location>
    <ligand>
        <name>Mg(2+)</name>
        <dbReference type="ChEBI" id="CHEBI:18420"/>
    </ligand>
</feature>
<feature type="binding site" evidence="3">
    <location>
        <position position="23"/>
    </location>
    <ligand>
        <name>GTP</name>
        <dbReference type="ChEBI" id="CHEBI:37565"/>
    </ligand>
</feature>
<feature type="binding site" evidence="3">
    <location>
        <position position="40"/>
    </location>
    <ligand>
        <name>GTP</name>
        <dbReference type="ChEBI" id="CHEBI:37565"/>
    </ligand>
</feature>
<feature type="binding site" evidence="3">
    <location>
        <position position="40"/>
    </location>
    <ligand>
        <name>Mg(2+)</name>
        <dbReference type="ChEBI" id="CHEBI:18420"/>
    </ligand>
</feature>
<feature type="binding site" evidence="3">
    <location>
        <position position="63"/>
    </location>
    <ligand>
        <name>Mg(2+)</name>
        <dbReference type="ChEBI" id="CHEBI:18420"/>
    </ligand>
</feature>
<feature type="binding site" evidence="3">
    <location>
        <position position="66"/>
    </location>
    <ligand>
        <name>GTP</name>
        <dbReference type="ChEBI" id="CHEBI:37565"/>
    </ligand>
</feature>
<feature type="binding site" evidence="3">
    <location>
        <position position="121"/>
    </location>
    <ligand>
        <name>GTP</name>
        <dbReference type="ChEBI" id="CHEBI:37565"/>
    </ligand>
</feature>
<feature type="binding site" evidence="3">
    <location>
        <position position="122"/>
    </location>
    <ligand>
        <name>GTP</name>
        <dbReference type="ChEBI" id="CHEBI:37565"/>
    </ligand>
</feature>
<feature type="binding site" evidence="3">
    <location>
        <position position="124"/>
    </location>
    <ligand>
        <name>GTP</name>
        <dbReference type="ChEBI" id="CHEBI:37565"/>
    </ligand>
</feature>
<feature type="binding site" evidence="3">
    <location>
        <position position="152"/>
    </location>
    <ligand>
        <name>GTP</name>
        <dbReference type="ChEBI" id="CHEBI:37565"/>
    </ligand>
</feature>
<feature type="binding site" evidence="3">
    <location>
        <position position="153"/>
    </location>
    <ligand>
        <name>GTP</name>
        <dbReference type="ChEBI" id="CHEBI:37565"/>
    </ligand>
</feature>
<feature type="modified residue" description="Phosphoserine" evidence="2">
    <location>
        <position position="178"/>
    </location>
</feature>
<feature type="modified residue" description="Cysteine methyl ester" evidence="5">
    <location>
        <position position="200"/>
    </location>
</feature>
<feature type="lipid moiety-binding region" description="S-geranylgeranyl cysteine" evidence="2">
    <location>
        <position position="200"/>
    </location>
</feature>
<feature type="cross-link" description="Glycyl lysine isopeptide (Lys-Gly) (interchain with G-Cter in ubiquitin)" evidence="2">
    <location>
        <position position="46"/>
    </location>
</feature>
<feature type="cross-link" description="Glycyl lysine isopeptide (Lys-Gly) (interchain with G-Cter in ubiquitin)" evidence="2">
    <location>
        <position position="58"/>
    </location>
</feature>
<gene>
    <name type="primary">RAB13</name>
</gene>
<dbReference type="EC" id="3.6.5.2" evidence="4"/>
<dbReference type="EMBL" id="AAEX03005351">
    <property type="status" value="NOT_ANNOTATED_CDS"/>
    <property type="molecule type" value="Genomic_DNA"/>
</dbReference>
<dbReference type="RefSeq" id="NP_001300788.1">
    <property type="nucleotide sequence ID" value="NM_001313859.1"/>
</dbReference>
<dbReference type="SMR" id="F1PTE3"/>
<dbReference type="FunCoup" id="F1PTE3">
    <property type="interactions" value="267"/>
</dbReference>
<dbReference type="STRING" id="9615.ENSCAFP00000025621"/>
<dbReference type="PaxDb" id="9612-ENSCAFP00000025621"/>
<dbReference type="Ensembl" id="ENSCAFT00000027549.5">
    <property type="protein sequence ID" value="ENSCAFP00000025621.3"/>
    <property type="gene ID" value="ENSCAFG00000017389.5"/>
</dbReference>
<dbReference type="Ensembl" id="ENSCAFT00030041868.1">
    <property type="protein sequence ID" value="ENSCAFP00030036526.1"/>
    <property type="gene ID" value="ENSCAFG00030022772.1"/>
</dbReference>
<dbReference type="Ensembl" id="ENSCAFT00040005537.1">
    <property type="protein sequence ID" value="ENSCAFP00040004761.1"/>
    <property type="gene ID" value="ENSCAFG00040002923.1"/>
</dbReference>
<dbReference type="Ensembl" id="ENSCAFT00845028937.1">
    <property type="protein sequence ID" value="ENSCAFP00845022768.1"/>
    <property type="gene ID" value="ENSCAFG00845016274.1"/>
</dbReference>
<dbReference type="GeneID" id="612294"/>
<dbReference type="KEGG" id="cfa:612294"/>
<dbReference type="CTD" id="5872"/>
<dbReference type="VEuPathDB" id="HostDB:ENSCAFG00845016274"/>
<dbReference type="VGNC" id="VGNC:45253">
    <property type="gene designation" value="RAB13"/>
</dbReference>
<dbReference type="eggNOG" id="KOG0078">
    <property type="taxonomic scope" value="Eukaryota"/>
</dbReference>
<dbReference type="GeneTree" id="ENSGT00940000159989"/>
<dbReference type="HOGENOM" id="CLU_041217_23_1_1"/>
<dbReference type="InParanoid" id="F1PTE3"/>
<dbReference type="OMA" id="CLIVRFS"/>
<dbReference type="OrthoDB" id="9989112at2759"/>
<dbReference type="TreeFam" id="TF314097"/>
<dbReference type="Reactome" id="R-CFA-8873719">
    <property type="pathway name" value="RAB geranylgeranylation"/>
</dbReference>
<dbReference type="Reactome" id="R-CFA-8876198">
    <property type="pathway name" value="RAB GEFs exchange GTP for GDP on RABs"/>
</dbReference>
<dbReference type="Proteomes" id="UP000002254">
    <property type="component" value="Chromosome 7"/>
</dbReference>
<dbReference type="Proteomes" id="UP000694429">
    <property type="component" value="Chromosome 7"/>
</dbReference>
<dbReference type="Proteomes" id="UP000694542">
    <property type="component" value="Chromosome 7"/>
</dbReference>
<dbReference type="Proteomes" id="UP000805418">
    <property type="component" value="Chromosome 7"/>
</dbReference>
<dbReference type="Bgee" id="ENSCAFG00000017389">
    <property type="expression patterns" value="Expressed in lymph node and 49 other cell types or tissues"/>
</dbReference>
<dbReference type="GO" id="GO:0005923">
    <property type="term" value="C:bicellular tight junction"/>
    <property type="evidence" value="ECO:0000250"/>
    <property type="project" value="UniProtKB"/>
</dbReference>
<dbReference type="GO" id="GO:0031410">
    <property type="term" value="C:cytoplasmic vesicle"/>
    <property type="evidence" value="ECO:0000250"/>
    <property type="project" value="UniProtKB"/>
</dbReference>
<dbReference type="GO" id="GO:0030139">
    <property type="term" value="C:endocytic vesicle"/>
    <property type="evidence" value="ECO:0000250"/>
    <property type="project" value="UniProtKB"/>
</dbReference>
<dbReference type="GO" id="GO:0005768">
    <property type="term" value="C:endosome"/>
    <property type="evidence" value="ECO:0000318"/>
    <property type="project" value="GO_Central"/>
</dbReference>
<dbReference type="GO" id="GO:0032593">
    <property type="term" value="C:insulin-responsive compartment"/>
    <property type="evidence" value="ECO:0000250"/>
    <property type="project" value="UniProtKB"/>
</dbReference>
<dbReference type="GO" id="GO:0030027">
    <property type="term" value="C:lamellipodium"/>
    <property type="evidence" value="ECO:0000250"/>
    <property type="project" value="UniProtKB"/>
</dbReference>
<dbReference type="GO" id="GO:0016328">
    <property type="term" value="C:lateral plasma membrane"/>
    <property type="evidence" value="ECO:0000250"/>
    <property type="project" value="UniProtKB"/>
</dbReference>
<dbReference type="GO" id="GO:0043005">
    <property type="term" value="C:neuron projection"/>
    <property type="evidence" value="ECO:0000250"/>
    <property type="project" value="UniProtKB"/>
</dbReference>
<dbReference type="GO" id="GO:0005886">
    <property type="term" value="C:plasma membrane"/>
    <property type="evidence" value="ECO:0000314"/>
    <property type="project" value="UniProtKB"/>
</dbReference>
<dbReference type="GO" id="GO:0055037">
    <property type="term" value="C:recycling endosome"/>
    <property type="evidence" value="ECO:0000314"/>
    <property type="project" value="UniProtKB"/>
</dbReference>
<dbReference type="GO" id="GO:0055038">
    <property type="term" value="C:recycling endosome membrane"/>
    <property type="evidence" value="ECO:0007669"/>
    <property type="project" value="UniProtKB-SubCell"/>
</dbReference>
<dbReference type="GO" id="GO:0008021">
    <property type="term" value="C:synaptic vesicle"/>
    <property type="evidence" value="ECO:0000318"/>
    <property type="project" value="GO_Central"/>
</dbReference>
<dbReference type="GO" id="GO:0005802">
    <property type="term" value="C:trans-Golgi network"/>
    <property type="evidence" value="ECO:0000250"/>
    <property type="project" value="UniProtKB"/>
</dbReference>
<dbReference type="GO" id="GO:0030140">
    <property type="term" value="C:trans-Golgi network transport vesicle"/>
    <property type="evidence" value="ECO:0000318"/>
    <property type="project" value="GO_Central"/>
</dbReference>
<dbReference type="GO" id="GO:0005525">
    <property type="term" value="F:GTP binding"/>
    <property type="evidence" value="ECO:0007669"/>
    <property type="project" value="UniProtKB-KW"/>
</dbReference>
<dbReference type="GO" id="GO:0003924">
    <property type="term" value="F:GTPase activity"/>
    <property type="evidence" value="ECO:0000318"/>
    <property type="project" value="GO_Central"/>
</dbReference>
<dbReference type="GO" id="GO:0070830">
    <property type="term" value="P:bicellular tight junction assembly"/>
    <property type="evidence" value="ECO:0000315"/>
    <property type="project" value="UniProtKB"/>
</dbReference>
<dbReference type="GO" id="GO:0032869">
    <property type="term" value="P:cellular response to insulin stimulus"/>
    <property type="evidence" value="ECO:0000250"/>
    <property type="project" value="UniProtKB"/>
</dbReference>
<dbReference type="GO" id="GO:0030866">
    <property type="term" value="P:cortical actin cytoskeleton organization"/>
    <property type="evidence" value="ECO:0000250"/>
    <property type="project" value="UniProtKB"/>
</dbReference>
<dbReference type="GO" id="GO:0032456">
    <property type="term" value="P:endocytic recycling"/>
    <property type="evidence" value="ECO:0000315"/>
    <property type="project" value="UniProtKB"/>
</dbReference>
<dbReference type="GO" id="GO:0035767">
    <property type="term" value="P:endothelial cell chemotaxis"/>
    <property type="evidence" value="ECO:0000250"/>
    <property type="project" value="UniProtKB"/>
</dbReference>
<dbReference type="GO" id="GO:0097368">
    <property type="term" value="P:establishment of Sertoli cell barrier"/>
    <property type="evidence" value="ECO:0000250"/>
    <property type="project" value="UniProtKB"/>
</dbReference>
<dbReference type="GO" id="GO:0006887">
    <property type="term" value="P:exocytosis"/>
    <property type="evidence" value="ECO:0000318"/>
    <property type="project" value="GO_Central"/>
</dbReference>
<dbReference type="GO" id="GO:0031175">
    <property type="term" value="P:neuron projection development"/>
    <property type="evidence" value="ECO:0000250"/>
    <property type="project" value="UniProtKB"/>
</dbReference>
<dbReference type="GO" id="GO:0010737">
    <property type="term" value="P:protein kinase A signaling"/>
    <property type="evidence" value="ECO:0000315"/>
    <property type="project" value="UniProtKB"/>
</dbReference>
<dbReference type="GO" id="GO:1902463">
    <property type="term" value="P:protein localization to cell leading edge"/>
    <property type="evidence" value="ECO:0000250"/>
    <property type="project" value="UniProtKB"/>
</dbReference>
<dbReference type="GO" id="GO:0072659">
    <property type="term" value="P:protein localization to plasma membrane"/>
    <property type="evidence" value="ECO:0000315"/>
    <property type="project" value="UniProtKB"/>
</dbReference>
<dbReference type="GO" id="GO:0015031">
    <property type="term" value="P:protein transport"/>
    <property type="evidence" value="ECO:0007669"/>
    <property type="project" value="UniProtKB-KW"/>
</dbReference>
<dbReference type="GO" id="GO:0044795">
    <property type="term" value="P:trans-Golgi network to recycling endosome transport"/>
    <property type="evidence" value="ECO:0000315"/>
    <property type="project" value="UniProtKB"/>
</dbReference>
<dbReference type="CDD" id="cd01867">
    <property type="entry name" value="Rab8_Rab10_Rab13_like"/>
    <property type="match status" value="1"/>
</dbReference>
<dbReference type="FunFam" id="3.40.50.300:FF:000363">
    <property type="entry name" value="Secretion related GTPase srgA"/>
    <property type="match status" value="1"/>
</dbReference>
<dbReference type="Gene3D" id="3.40.50.300">
    <property type="entry name" value="P-loop containing nucleotide triphosphate hydrolases"/>
    <property type="match status" value="1"/>
</dbReference>
<dbReference type="InterPro" id="IPR027417">
    <property type="entry name" value="P-loop_NTPase"/>
</dbReference>
<dbReference type="InterPro" id="IPR005225">
    <property type="entry name" value="Small_GTP-bd"/>
</dbReference>
<dbReference type="InterPro" id="IPR001806">
    <property type="entry name" value="Small_GTPase"/>
</dbReference>
<dbReference type="InterPro" id="IPR050305">
    <property type="entry name" value="Small_GTPase_Rab"/>
</dbReference>
<dbReference type="NCBIfam" id="TIGR00231">
    <property type="entry name" value="small_GTP"/>
    <property type="match status" value="1"/>
</dbReference>
<dbReference type="PANTHER" id="PTHR47980">
    <property type="entry name" value="LD44762P"/>
    <property type="match status" value="1"/>
</dbReference>
<dbReference type="Pfam" id="PF00071">
    <property type="entry name" value="Ras"/>
    <property type="match status" value="1"/>
</dbReference>
<dbReference type="PRINTS" id="PR00449">
    <property type="entry name" value="RASTRNSFRMNG"/>
</dbReference>
<dbReference type="SMART" id="SM00177">
    <property type="entry name" value="ARF"/>
    <property type="match status" value="1"/>
</dbReference>
<dbReference type="SMART" id="SM00175">
    <property type="entry name" value="RAB"/>
    <property type="match status" value="1"/>
</dbReference>
<dbReference type="SMART" id="SM00176">
    <property type="entry name" value="RAN"/>
    <property type="match status" value="1"/>
</dbReference>
<dbReference type="SMART" id="SM00173">
    <property type="entry name" value="RAS"/>
    <property type="match status" value="1"/>
</dbReference>
<dbReference type="SMART" id="SM00174">
    <property type="entry name" value="RHO"/>
    <property type="match status" value="1"/>
</dbReference>
<dbReference type="SUPFAM" id="SSF52540">
    <property type="entry name" value="P-loop containing nucleoside triphosphate hydrolases"/>
    <property type="match status" value="1"/>
</dbReference>
<dbReference type="PROSITE" id="PS51419">
    <property type="entry name" value="RAB"/>
    <property type="match status" value="1"/>
</dbReference>
<keyword id="KW-0965">Cell junction</keyword>
<keyword id="KW-1003">Cell membrane</keyword>
<keyword id="KW-0966">Cell projection</keyword>
<keyword id="KW-0968">Cytoplasmic vesicle</keyword>
<keyword id="KW-0967">Endosome</keyword>
<keyword id="KW-0333">Golgi apparatus</keyword>
<keyword id="KW-0342">GTP-binding</keyword>
<keyword id="KW-0378">Hydrolase</keyword>
<keyword id="KW-1017">Isopeptide bond</keyword>
<keyword id="KW-0449">Lipoprotein</keyword>
<keyword id="KW-0460">Magnesium</keyword>
<keyword id="KW-0472">Membrane</keyword>
<keyword id="KW-0479">Metal-binding</keyword>
<keyword id="KW-0488">Methylation</keyword>
<keyword id="KW-0547">Nucleotide-binding</keyword>
<keyword id="KW-0597">Phosphoprotein</keyword>
<keyword id="KW-0636">Prenylation</keyword>
<keyword id="KW-0653">Protein transport</keyword>
<keyword id="KW-1185">Reference proteome</keyword>
<keyword id="KW-0796">Tight junction</keyword>
<keyword id="KW-0813">Transport</keyword>
<keyword id="KW-0832">Ubl conjugation</keyword>
<accession>F1PTE3</accession>
<organism>
    <name type="scientific">Canis lupus familiaris</name>
    <name type="common">Dog</name>
    <name type="synonym">Canis familiaris</name>
    <dbReference type="NCBI Taxonomy" id="9615"/>
    <lineage>
        <taxon>Eukaryota</taxon>
        <taxon>Metazoa</taxon>
        <taxon>Chordata</taxon>
        <taxon>Craniata</taxon>
        <taxon>Vertebrata</taxon>
        <taxon>Euteleostomi</taxon>
        <taxon>Mammalia</taxon>
        <taxon>Eutheria</taxon>
        <taxon>Laurasiatheria</taxon>
        <taxon>Carnivora</taxon>
        <taxon>Caniformia</taxon>
        <taxon>Canidae</taxon>
        <taxon>Canis</taxon>
    </lineage>
</organism>
<comment type="function">
    <text evidence="7 9 10">The small GTPases Rab are key regulators of intracellular membrane trafficking, from the formation of transport vesicles to their fusion with membranes. Rabs cycle between an inactive GDP-bound form and an active GTP-bound form that is able to recruit to membranes different sets of downstream effectors directly responsible for vesicle formation, movement, tethering and fusion. RAB13 is involved in endocytic recycling and regulates the transport to the plasma membrane of transmembrane proteins like the tight junction protein OCLN/occludin. Thereby, it regulates the assembly and the activity of tight junctions. Moreover, it may also regulate tight junction assembly by activating the PKA signaling pathway and by reorganizing the actin cytoskeleton through the activation of the downstream effectors PRKACA and MICALL2 respectively. Through its role in tight junction assembly, may play a role in the establishment of Sertoli cell barrier. Plays also a role in angiogenesis through regulation of endothelial cells chemotaxis. Also involved in neurite outgrowth. Has also been proposed to play a role in post-Golgi membrane trafficking from the TGN to the recycling endosome. Finally, it has been involved in insulin-induced transport to the plasma membrane of the glucose transporter GLUT4 and therefore may play a role in glucose homeostasis.</text>
</comment>
<comment type="catalytic activity">
    <reaction evidence="2">
        <text>GTP + H2O = GDP + phosphate + H(+)</text>
        <dbReference type="Rhea" id="RHEA:19669"/>
        <dbReference type="ChEBI" id="CHEBI:15377"/>
        <dbReference type="ChEBI" id="CHEBI:15378"/>
        <dbReference type="ChEBI" id="CHEBI:37565"/>
        <dbReference type="ChEBI" id="CHEBI:43474"/>
        <dbReference type="ChEBI" id="CHEBI:58189"/>
        <dbReference type="EC" id="3.6.5.2"/>
    </reaction>
    <physiologicalReaction direction="left-to-right" evidence="2">
        <dbReference type="Rhea" id="RHEA:19670"/>
    </physiologicalReaction>
</comment>
<comment type="cofactor">
    <cofactor evidence="3">
        <name>Mg(2+)</name>
        <dbReference type="ChEBI" id="CHEBI:18420"/>
    </cofactor>
</comment>
<comment type="activity regulation">
    <text evidence="1 2">Regulated by guanine nucleotide exchange factors (GEFs) including DENND1C, which promote the exchange of bound GDP for free GTP. Regulated by GTPase activating proteins (GAPs) which increase the GTP hydrolysis activity. Inhibited by GDP dissociation inhibitors (GDIs) (By similarity). Activated in response to insulin (By similarity).</text>
</comment>
<comment type="subunit">
    <text evidence="2 8 9">Interacts (GTP-bound form) with MICALL2; competes with RAB8A and is involved in tight junctions assembly. Interacts (GTP-bound form) with MICALL1. Interacts (GTP-bound form) with MICAL1, MICAL3, MICALCL, EHBP1 and EHBP1L1; ternary complexes of RAB8A, RAB13 and either MICAL1 or EHBP1L1 are possible. Interacts with PRKACA; downstream effector of RAB13 involved in tight junction assembly. Interacts with GRB2; may recruit RAB13 to the leading edge of migrating endothelial cells where it can activate RHOA. Interacts (isoprenylated form) with PDE6D; dissociates RAB13 from membranes. Interacts with BICDL2/BICDR2. Interacts with LEPROT and LEPROTL1.</text>
</comment>
<comment type="subcellular location">
    <subcellularLocation>
        <location evidence="9">Cell membrane</location>
        <topology evidence="9">Lipid-anchor</topology>
        <orientation evidence="9">Cytoplasmic side</orientation>
    </subcellularLocation>
    <subcellularLocation>
        <location evidence="2">Cytoplasmic vesicle membrane</location>
        <topology evidence="11">Lipid-anchor</topology>
        <orientation evidence="11">Cytoplasmic side</orientation>
    </subcellularLocation>
    <subcellularLocation>
        <location evidence="2">Cell junction</location>
        <location evidence="2">Tight junction</location>
    </subcellularLocation>
    <subcellularLocation>
        <location evidence="2">Golgi apparatus</location>
        <location evidence="2">trans-Golgi network membrane</location>
    </subcellularLocation>
    <subcellularLocation>
        <location evidence="9">Recycling endosome membrane</location>
    </subcellularLocation>
    <subcellularLocation>
        <location evidence="4">Cell projection</location>
        <location evidence="4">Lamellipodium</location>
    </subcellularLocation>
    <text evidence="2 4">Tight junctions or associated with vesicles scattered throughout the cytoplasm in cells lacking tight junctions. Relocalizes to the leading edge of lamellipodia in migrating endothelial cells.</text>
</comment>
<comment type="domain">
    <text evidence="3">Switch 1, switch 2 and the interswitch regions are characteristic of Rab GTPases and mediate the interactions with Rab downstream effectors. The switch regions undergo conformational changes upon nucleotide binding which drive interaction with specific sets of effector proteins, with most effectors only binding to GTP-bound Rab.</text>
</comment>
<comment type="PTM">
    <text evidence="2">Ubiquitinated via 'Lys-11'-linked ubiquitination on Lys-46 and Lys-58; impairing the recruitment of guanosine diphosphate (GDP) dissociation inhibitor 1/GDI1.</text>
</comment>
<comment type="similarity">
    <text evidence="11">Belongs to the small GTPase superfamily. Rab family.</text>
</comment>
<name>RAB13_CANLF</name>
<sequence length="203" mass="22667">MAKAYDHLFKLLLIGDSGVGKTCLIIRFAEDSFNNTYISTIGIDFKIRTVDVEGKKIKLQVWDTAGQERFKTITTAYYRGAMGIILVYDITDEKSFENIQNWMKSIKENASAGVERLLLGNKCDMEAKRKVQKEQAIKLAREHGIRFFETSAKSSTNVDEAFSSLARDILLKSGGRRSGNSHKAPGTDLKPCDKKNTSKCSLG</sequence>